<protein>
    <recommendedName>
        <fullName evidence="1">L-rhamnose mutarotase</fullName>
        <ecNumber evidence="1">5.1.3.32</ecNumber>
    </recommendedName>
    <alternativeName>
        <fullName evidence="1">Rhamnose 1-epimerase</fullName>
    </alternativeName>
    <alternativeName>
        <fullName evidence="1">Type-3 mutarotase</fullName>
    </alternativeName>
</protein>
<proteinExistence type="inferred from homology"/>
<sequence length="104" mass="12559">MKRKGFIMTVYPDKHDEYEKRHNEIWPEMVAELKKHGAHNYSIFLDKQTNQLFGYIEIEDEEKWSKMAETSINQKWWKFMKPVMKTNSDDSPVSTDLTEVFHMD</sequence>
<comment type="function">
    <text evidence="1">Involved in the anomeric conversion of L-rhamnose.</text>
</comment>
<comment type="catalytic activity">
    <reaction evidence="1">
        <text>alpha-L-rhamnose = beta-L-rhamnose</text>
        <dbReference type="Rhea" id="RHEA:25584"/>
        <dbReference type="ChEBI" id="CHEBI:27586"/>
        <dbReference type="ChEBI" id="CHEBI:27907"/>
        <dbReference type="EC" id="5.1.3.32"/>
    </reaction>
</comment>
<comment type="pathway">
    <text evidence="1">Carbohydrate metabolism; L-rhamnose metabolism.</text>
</comment>
<comment type="subunit">
    <text evidence="1">Homodimer.</text>
</comment>
<comment type="subcellular location">
    <subcellularLocation>
        <location evidence="1">Cytoplasm</location>
    </subcellularLocation>
</comment>
<comment type="similarity">
    <text evidence="1">Belongs to the rhamnose mutarotase family.</text>
</comment>
<dbReference type="EC" id="5.1.3.32" evidence="1"/>
<dbReference type="EMBL" id="BA000028">
    <property type="protein sequence ID" value="BAC12449.1"/>
    <property type="molecule type" value="Genomic_DNA"/>
</dbReference>
<dbReference type="RefSeq" id="WP_011064897.1">
    <property type="nucleotide sequence ID" value="NC_004193.1"/>
</dbReference>
<dbReference type="SMR" id="Q8ESX3"/>
<dbReference type="STRING" id="221109.gene:10732696"/>
<dbReference type="KEGG" id="oih:OB0493"/>
<dbReference type="eggNOG" id="COG3254">
    <property type="taxonomic scope" value="Bacteria"/>
</dbReference>
<dbReference type="HOGENOM" id="CLU_100689_2_0_9"/>
<dbReference type="OrthoDB" id="9799608at2"/>
<dbReference type="PhylomeDB" id="Q8ESX3"/>
<dbReference type="UniPathway" id="UPA00125"/>
<dbReference type="Proteomes" id="UP000000822">
    <property type="component" value="Chromosome"/>
</dbReference>
<dbReference type="GO" id="GO:0005737">
    <property type="term" value="C:cytoplasm"/>
    <property type="evidence" value="ECO:0007669"/>
    <property type="project" value="UniProtKB-SubCell"/>
</dbReference>
<dbReference type="GO" id="GO:0062192">
    <property type="term" value="F:L-rhamnose mutarotase activity"/>
    <property type="evidence" value="ECO:0007669"/>
    <property type="project" value="UniProtKB-EC"/>
</dbReference>
<dbReference type="GO" id="GO:0019301">
    <property type="term" value="P:rhamnose catabolic process"/>
    <property type="evidence" value="ECO:0007669"/>
    <property type="project" value="TreeGrafter"/>
</dbReference>
<dbReference type="Gene3D" id="3.30.70.100">
    <property type="match status" value="1"/>
</dbReference>
<dbReference type="HAMAP" id="MF_01663">
    <property type="entry name" value="L_rham_rotase"/>
    <property type="match status" value="1"/>
</dbReference>
<dbReference type="InterPro" id="IPR011008">
    <property type="entry name" value="Dimeric_a/b-barrel"/>
</dbReference>
<dbReference type="InterPro" id="IPR013448">
    <property type="entry name" value="L-rhamnose_mutarotase"/>
</dbReference>
<dbReference type="InterPro" id="IPR008000">
    <property type="entry name" value="Rham/fucose_mutarotase"/>
</dbReference>
<dbReference type="NCBIfam" id="TIGR02625">
    <property type="entry name" value="YiiL_rotase"/>
    <property type="match status" value="1"/>
</dbReference>
<dbReference type="PANTHER" id="PTHR34389">
    <property type="entry name" value="L-RHAMNOSE MUTAROTASE"/>
    <property type="match status" value="1"/>
</dbReference>
<dbReference type="PANTHER" id="PTHR34389:SF2">
    <property type="entry name" value="L-RHAMNOSE MUTAROTASE"/>
    <property type="match status" value="1"/>
</dbReference>
<dbReference type="Pfam" id="PF05336">
    <property type="entry name" value="rhaM"/>
    <property type="match status" value="1"/>
</dbReference>
<dbReference type="SUPFAM" id="SSF54909">
    <property type="entry name" value="Dimeric alpha+beta barrel"/>
    <property type="match status" value="1"/>
</dbReference>
<feature type="chain" id="PRO_0000344589" description="L-rhamnose mutarotase">
    <location>
        <begin position="1"/>
        <end position="104"/>
    </location>
</feature>
<feature type="active site" description="Proton donor" evidence="1">
    <location>
        <position position="22"/>
    </location>
</feature>
<feature type="binding site" evidence="1">
    <location>
        <position position="18"/>
    </location>
    <ligand>
        <name>substrate</name>
    </ligand>
</feature>
<feature type="binding site" evidence="1">
    <location>
        <position position="41"/>
    </location>
    <ligand>
        <name>substrate</name>
    </ligand>
</feature>
<feature type="binding site" evidence="1">
    <location>
        <begin position="76"/>
        <end position="77"/>
    </location>
    <ligand>
        <name>substrate</name>
    </ligand>
</feature>
<keyword id="KW-0119">Carbohydrate metabolism</keyword>
<keyword id="KW-0963">Cytoplasm</keyword>
<keyword id="KW-0413">Isomerase</keyword>
<keyword id="KW-1185">Reference proteome</keyword>
<keyword id="KW-0684">Rhamnose metabolism</keyword>
<name>RHAM_OCEIH</name>
<reference key="1">
    <citation type="journal article" date="2002" name="Nucleic Acids Res.">
        <title>Genome sequence of Oceanobacillus iheyensis isolated from the Iheya Ridge and its unexpected adaptive capabilities to extreme environments.</title>
        <authorList>
            <person name="Takami H."/>
            <person name="Takaki Y."/>
            <person name="Uchiyama I."/>
        </authorList>
    </citation>
    <scope>NUCLEOTIDE SEQUENCE [LARGE SCALE GENOMIC DNA]</scope>
    <source>
        <strain>DSM 14371 / CIP 107618 / JCM 11309 / KCTC 3954 / HTE831</strain>
    </source>
</reference>
<organism>
    <name type="scientific">Oceanobacillus iheyensis (strain DSM 14371 / CIP 107618 / JCM 11309 / KCTC 3954 / HTE831)</name>
    <dbReference type="NCBI Taxonomy" id="221109"/>
    <lineage>
        <taxon>Bacteria</taxon>
        <taxon>Bacillati</taxon>
        <taxon>Bacillota</taxon>
        <taxon>Bacilli</taxon>
        <taxon>Bacillales</taxon>
        <taxon>Bacillaceae</taxon>
        <taxon>Oceanobacillus</taxon>
    </lineage>
</organism>
<gene>
    <name evidence="1" type="primary">rhaM</name>
    <name type="ordered locus">OB0493</name>
</gene>
<accession>Q8ESX3</accession>
<evidence type="ECO:0000255" key="1">
    <source>
        <dbReference type="HAMAP-Rule" id="MF_01663"/>
    </source>
</evidence>